<accession>A4VQM7</accession>
<proteinExistence type="inferred from homology"/>
<protein>
    <recommendedName>
        <fullName evidence="1">Large ribosomal subunit protein bL9</fullName>
    </recommendedName>
    <alternativeName>
        <fullName evidence="2">50S ribosomal protein L9</fullName>
    </alternativeName>
</protein>
<evidence type="ECO:0000255" key="1">
    <source>
        <dbReference type="HAMAP-Rule" id="MF_00503"/>
    </source>
</evidence>
<evidence type="ECO:0000305" key="2"/>
<dbReference type="EMBL" id="CP000304">
    <property type="protein sequence ID" value="ABP81278.1"/>
    <property type="molecule type" value="Genomic_DNA"/>
</dbReference>
<dbReference type="RefSeq" id="WP_011914672.1">
    <property type="nucleotide sequence ID" value="NC_009434.1"/>
</dbReference>
<dbReference type="SMR" id="A4VQM7"/>
<dbReference type="GeneID" id="75212066"/>
<dbReference type="KEGG" id="psa:PST_3653"/>
<dbReference type="eggNOG" id="COG0359">
    <property type="taxonomic scope" value="Bacteria"/>
</dbReference>
<dbReference type="HOGENOM" id="CLU_078938_4_1_6"/>
<dbReference type="Proteomes" id="UP000000233">
    <property type="component" value="Chromosome"/>
</dbReference>
<dbReference type="GO" id="GO:1990904">
    <property type="term" value="C:ribonucleoprotein complex"/>
    <property type="evidence" value="ECO:0007669"/>
    <property type="project" value="UniProtKB-KW"/>
</dbReference>
<dbReference type="GO" id="GO:0005840">
    <property type="term" value="C:ribosome"/>
    <property type="evidence" value="ECO:0007669"/>
    <property type="project" value="UniProtKB-KW"/>
</dbReference>
<dbReference type="GO" id="GO:0019843">
    <property type="term" value="F:rRNA binding"/>
    <property type="evidence" value="ECO:0007669"/>
    <property type="project" value="UniProtKB-UniRule"/>
</dbReference>
<dbReference type="GO" id="GO:0003735">
    <property type="term" value="F:structural constituent of ribosome"/>
    <property type="evidence" value="ECO:0007669"/>
    <property type="project" value="InterPro"/>
</dbReference>
<dbReference type="GO" id="GO:0006412">
    <property type="term" value="P:translation"/>
    <property type="evidence" value="ECO:0007669"/>
    <property type="project" value="UniProtKB-UniRule"/>
</dbReference>
<dbReference type="Gene3D" id="3.10.430.100">
    <property type="entry name" value="Ribosomal protein L9, C-terminal domain"/>
    <property type="match status" value="1"/>
</dbReference>
<dbReference type="Gene3D" id="3.40.5.10">
    <property type="entry name" value="Ribosomal protein L9, N-terminal domain"/>
    <property type="match status" value="1"/>
</dbReference>
<dbReference type="HAMAP" id="MF_00503">
    <property type="entry name" value="Ribosomal_bL9"/>
    <property type="match status" value="1"/>
</dbReference>
<dbReference type="InterPro" id="IPR000244">
    <property type="entry name" value="Ribosomal_bL9"/>
</dbReference>
<dbReference type="InterPro" id="IPR009027">
    <property type="entry name" value="Ribosomal_bL9/RNase_H1_N"/>
</dbReference>
<dbReference type="InterPro" id="IPR020594">
    <property type="entry name" value="Ribosomal_bL9_bac/chp"/>
</dbReference>
<dbReference type="InterPro" id="IPR020069">
    <property type="entry name" value="Ribosomal_bL9_C"/>
</dbReference>
<dbReference type="InterPro" id="IPR036791">
    <property type="entry name" value="Ribosomal_bL9_C_sf"/>
</dbReference>
<dbReference type="InterPro" id="IPR020070">
    <property type="entry name" value="Ribosomal_bL9_N"/>
</dbReference>
<dbReference type="InterPro" id="IPR036935">
    <property type="entry name" value="Ribosomal_bL9_N_sf"/>
</dbReference>
<dbReference type="NCBIfam" id="TIGR00158">
    <property type="entry name" value="L9"/>
    <property type="match status" value="1"/>
</dbReference>
<dbReference type="PANTHER" id="PTHR21368">
    <property type="entry name" value="50S RIBOSOMAL PROTEIN L9"/>
    <property type="match status" value="1"/>
</dbReference>
<dbReference type="Pfam" id="PF03948">
    <property type="entry name" value="Ribosomal_L9_C"/>
    <property type="match status" value="1"/>
</dbReference>
<dbReference type="Pfam" id="PF01281">
    <property type="entry name" value="Ribosomal_L9_N"/>
    <property type="match status" value="1"/>
</dbReference>
<dbReference type="SUPFAM" id="SSF55658">
    <property type="entry name" value="L9 N-domain-like"/>
    <property type="match status" value="1"/>
</dbReference>
<dbReference type="SUPFAM" id="SSF55653">
    <property type="entry name" value="Ribosomal protein L9 C-domain"/>
    <property type="match status" value="1"/>
</dbReference>
<dbReference type="PROSITE" id="PS00651">
    <property type="entry name" value="RIBOSOMAL_L9"/>
    <property type="match status" value="1"/>
</dbReference>
<keyword id="KW-1185">Reference proteome</keyword>
<keyword id="KW-0687">Ribonucleoprotein</keyword>
<keyword id="KW-0689">Ribosomal protein</keyword>
<keyword id="KW-0694">RNA-binding</keyword>
<keyword id="KW-0699">rRNA-binding</keyword>
<sequence length="148" mass="15414">MEVILLEKIANLGNLGDKVNVKAGYGRNYLLPQGKATAATPANIAEFEARRAELEKAAAEKKASAETRAAQLAELEVTITATAGDEGKLFGSIGTADIADALTASGVEVAKSEVRLPNGTIRQTGEYDVAVHLHTDVEATVKLIVVAG</sequence>
<reference key="1">
    <citation type="journal article" date="2008" name="Proc. Natl. Acad. Sci. U.S.A.">
        <title>Nitrogen fixation island and rhizosphere competence traits in the genome of root-associated Pseudomonas stutzeri A1501.</title>
        <authorList>
            <person name="Yan Y."/>
            <person name="Yang J."/>
            <person name="Dou Y."/>
            <person name="Chen M."/>
            <person name="Ping S."/>
            <person name="Peng J."/>
            <person name="Lu W."/>
            <person name="Zhang W."/>
            <person name="Yao Z."/>
            <person name="Li H."/>
            <person name="Liu W."/>
            <person name="He S."/>
            <person name="Geng L."/>
            <person name="Zhang X."/>
            <person name="Yang F."/>
            <person name="Yu H."/>
            <person name="Zhan Y."/>
            <person name="Li D."/>
            <person name="Lin Z."/>
            <person name="Wang Y."/>
            <person name="Elmerich C."/>
            <person name="Lin M."/>
            <person name="Jin Q."/>
        </authorList>
    </citation>
    <scope>NUCLEOTIDE SEQUENCE [LARGE SCALE GENOMIC DNA]</scope>
    <source>
        <strain>A1501</strain>
    </source>
</reference>
<feature type="chain" id="PRO_1000014841" description="Large ribosomal subunit protein bL9">
    <location>
        <begin position="1"/>
        <end position="148"/>
    </location>
</feature>
<organism>
    <name type="scientific">Stutzerimonas stutzeri (strain A1501)</name>
    <name type="common">Pseudomonas stutzeri</name>
    <dbReference type="NCBI Taxonomy" id="379731"/>
    <lineage>
        <taxon>Bacteria</taxon>
        <taxon>Pseudomonadati</taxon>
        <taxon>Pseudomonadota</taxon>
        <taxon>Gammaproteobacteria</taxon>
        <taxon>Pseudomonadales</taxon>
        <taxon>Pseudomonadaceae</taxon>
        <taxon>Stutzerimonas</taxon>
    </lineage>
</organism>
<comment type="function">
    <text evidence="1">Binds to the 23S rRNA.</text>
</comment>
<comment type="similarity">
    <text evidence="1">Belongs to the bacterial ribosomal protein bL9 family.</text>
</comment>
<name>RL9_STUS1</name>
<gene>
    <name evidence="1" type="primary">rplI</name>
    <name type="ordered locus">PST_3653</name>
</gene>